<feature type="chain" id="PRO_0000213577" description="Autophagy-related protein 3">
    <location>
        <begin position="1"/>
        <end position="309"/>
    </location>
</feature>
<feature type="region of interest" description="Flexible region" evidence="1">
    <location>
        <begin position="83"/>
        <end position="151"/>
    </location>
</feature>
<feature type="region of interest" description="Handle region" evidence="1">
    <location>
        <begin position="226"/>
        <end position="284"/>
    </location>
</feature>
<feature type="region of interest" description="Disordered" evidence="2">
    <location>
        <begin position="243"/>
        <end position="270"/>
    </location>
</feature>
<feature type="active site" description="Glycyl thioester intermediate" evidence="1">
    <location>
        <position position="222"/>
    </location>
</feature>
<name>ATG3_CANGA</name>
<organism>
    <name type="scientific">Candida glabrata (strain ATCC 2001 / BCRC 20586 / JCM 3761 / NBRC 0622 / NRRL Y-65 / CBS 138)</name>
    <name type="common">Yeast</name>
    <name type="synonym">Nakaseomyces glabratus</name>
    <dbReference type="NCBI Taxonomy" id="284593"/>
    <lineage>
        <taxon>Eukaryota</taxon>
        <taxon>Fungi</taxon>
        <taxon>Dikarya</taxon>
        <taxon>Ascomycota</taxon>
        <taxon>Saccharomycotina</taxon>
        <taxon>Saccharomycetes</taxon>
        <taxon>Saccharomycetales</taxon>
        <taxon>Saccharomycetaceae</taxon>
        <taxon>Nakaseomyces</taxon>
    </lineage>
</organism>
<evidence type="ECO:0000250" key="1"/>
<evidence type="ECO:0000256" key="2">
    <source>
        <dbReference type="SAM" id="MobiDB-lite"/>
    </source>
</evidence>
<evidence type="ECO:0000305" key="3"/>
<accession>Q6FQJ2</accession>
<proteinExistence type="inferred from homology"/>
<sequence length="309" mass="35528">MIRSALSNWREYLTPVSHKSTFLTTGQITPEEFVQAGDYLCHMFPTWKWNDMADDNKYRDFLPKDKQFLVIRKVPCSERAQAVVTMDEIENGTSTDAFSAADDEDNDDDSIEIIPVSKSSSGADNDVNDIDELMEEMELEEDDDIVANKTNEMLRYYDLFITYSTSYRVPKMYIVGFNGNGTPLTPKEMFEDITPDYRKKTATIEKLPFYKRNVPSVSIHPCKHANVMKVLLDKISVVKERQREEEMQKNAEVGAPKSAGSDDGDNENWEDLQQDIDDSLRVDLYLVVFLKFITSVTPTIQHDYTMEGW</sequence>
<gene>
    <name type="primary">ATG3</name>
    <name type="ordered locus">CAGL0I05808g</name>
</gene>
<comment type="function">
    <text evidence="1">E2 conjugating enzyme required for the cytoplasm to vacuole transport (Cvt) and autophagy. Required for selective autophagic degradation of the nucleus (nucleophagy) as well as for mitophagy which contributes to regulate mitochondrial quantity and quality by eliminating the mitochondria to a basal level to fulfill cellular energy requirements and preventing excess ROS production. Responsible for the E2-like covalent binding of phosphatidylethanolamine to the C-terminal Gly of ATG8. The ATG12-ATG5 conjugate plays a role of an E3 and promotes the transfer of ATG8 from ATG3 to phosphatidylethanolamine (PE). This step is required for the membrane association of ATG8. The formation of the ATG8-phosphatidylethanolamine conjugate is essential for autophagy and for the cytoplasm to vacuole transport (Cvt). The ATG8-PE conjugate mediates tethering between adjacent membranes and stimulates membrane hemifusion, leading to expansion of the autophagosomal membrane during autophagy (By similarity).</text>
</comment>
<comment type="subunit">
    <text evidence="1">Monomer. Interacts with ATG8 through an intermediate thioester bond through the C-terminal Gly of ATG8. Also interacts with the 40 amino acid C-terminal region of the E1-like ATG7 enzyme. Also interacts with the ATG12-ATG5 conjugate.</text>
</comment>
<comment type="subcellular location">
    <subcellularLocation>
        <location evidence="1">Cytoplasm</location>
    </subcellularLocation>
</comment>
<comment type="domain">
    <text evidence="1">The N-terminal region is involved in phosphatidylethanolamine-binding and is required for ATG8-PE conjugation.</text>
</comment>
<comment type="domain">
    <text evidence="1">The flexible region (FR) is required for ATG7-binding.</text>
</comment>
<comment type="domain">
    <text evidence="1">The handle region (HR) contains the ATG8 interaction motif (AIM) and mediates binding to ATG8. It is crucial for the cytoplasm-to-vacuole targeting pathway (By similarity).</text>
</comment>
<comment type="similarity">
    <text evidence="3">Belongs to the ATG3 family.</text>
</comment>
<dbReference type="EMBL" id="CR380955">
    <property type="protein sequence ID" value="CAG60439.1"/>
    <property type="molecule type" value="Genomic_DNA"/>
</dbReference>
<dbReference type="RefSeq" id="XP_447502.1">
    <property type="nucleotide sequence ID" value="XM_447502.1"/>
</dbReference>
<dbReference type="SMR" id="Q6FQJ2"/>
<dbReference type="FunCoup" id="Q6FQJ2">
    <property type="interactions" value="1134"/>
</dbReference>
<dbReference type="STRING" id="284593.Q6FQJ2"/>
<dbReference type="EnsemblFungi" id="CAGL0I05808g-T">
    <property type="protein sequence ID" value="CAGL0I05808g-T-p1"/>
    <property type="gene ID" value="CAGL0I05808g"/>
</dbReference>
<dbReference type="KEGG" id="cgr:2889347"/>
<dbReference type="CGD" id="CAL0132232">
    <property type="gene designation" value="CAGL0I05808g"/>
</dbReference>
<dbReference type="VEuPathDB" id="FungiDB:B1J91_I05808g"/>
<dbReference type="VEuPathDB" id="FungiDB:CAGL0I05808g"/>
<dbReference type="eggNOG" id="KOG2981">
    <property type="taxonomic scope" value="Eukaryota"/>
</dbReference>
<dbReference type="HOGENOM" id="CLU_027518_2_0_1"/>
<dbReference type="InParanoid" id="Q6FQJ2"/>
<dbReference type="OMA" id="HCPTWSW"/>
<dbReference type="Proteomes" id="UP000002428">
    <property type="component" value="Chromosome I"/>
</dbReference>
<dbReference type="GO" id="GO:0005829">
    <property type="term" value="C:cytosol"/>
    <property type="evidence" value="ECO:0007669"/>
    <property type="project" value="EnsemblFungi"/>
</dbReference>
<dbReference type="GO" id="GO:0005739">
    <property type="term" value="C:mitochondrion"/>
    <property type="evidence" value="ECO:0007669"/>
    <property type="project" value="EnsemblFungi"/>
</dbReference>
<dbReference type="GO" id="GO:0061908">
    <property type="term" value="C:phagophore"/>
    <property type="evidence" value="ECO:0007669"/>
    <property type="project" value="EnsemblFungi"/>
</dbReference>
<dbReference type="GO" id="GO:0000407">
    <property type="term" value="C:phagophore assembly site"/>
    <property type="evidence" value="ECO:0007669"/>
    <property type="project" value="EnsemblFungi"/>
</dbReference>
<dbReference type="GO" id="GO:0019776">
    <property type="term" value="F:Atg8-family ligase activity"/>
    <property type="evidence" value="ECO:0007669"/>
    <property type="project" value="EnsemblFungi"/>
</dbReference>
<dbReference type="GO" id="GO:0000045">
    <property type="term" value="P:autophagosome assembly"/>
    <property type="evidence" value="ECO:0007669"/>
    <property type="project" value="EnsemblFungi"/>
</dbReference>
<dbReference type="GO" id="GO:0000422">
    <property type="term" value="P:autophagy of mitochondrion"/>
    <property type="evidence" value="ECO:0007669"/>
    <property type="project" value="EnsemblFungi"/>
</dbReference>
<dbReference type="GO" id="GO:0032258">
    <property type="term" value="P:cytoplasm to vacuole targeting by the Cvt pathway"/>
    <property type="evidence" value="ECO:0007669"/>
    <property type="project" value="EnsemblFungi"/>
</dbReference>
<dbReference type="GO" id="GO:0061723">
    <property type="term" value="P:glycophagy"/>
    <property type="evidence" value="ECO:0007669"/>
    <property type="project" value="TreeGrafter"/>
</dbReference>
<dbReference type="GO" id="GO:0034727">
    <property type="term" value="P:piecemeal microautophagy of the nucleus"/>
    <property type="evidence" value="ECO:0007669"/>
    <property type="project" value="EnsemblFungi"/>
</dbReference>
<dbReference type="GO" id="GO:0006612">
    <property type="term" value="P:protein targeting to membrane"/>
    <property type="evidence" value="ECO:0007669"/>
    <property type="project" value="EnsemblFungi"/>
</dbReference>
<dbReference type="Gene3D" id="3.30.1460.50">
    <property type="match status" value="1"/>
</dbReference>
<dbReference type="InterPro" id="IPR007135">
    <property type="entry name" value="Atg3/Atg10"/>
</dbReference>
<dbReference type="PANTHER" id="PTHR12866">
    <property type="entry name" value="UBIQUITIN-LIKE-CONJUGATING ENZYME ATG3"/>
    <property type="match status" value="1"/>
</dbReference>
<dbReference type="PANTHER" id="PTHR12866:SF2">
    <property type="entry name" value="UBIQUITIN-LIKE-CONJUGATING ENZYME ATG3"/>
    <property type="match status" value="1"/>
</dbReference>
<dbReference type="Pfam" id="PF03987">
    <property type="entry name" value="Autophagy_act_C"/>
    <property type="match status" value="1"/>
</dbReference>
<reference key="1">
    <citation type="journal article" date="2004" name="Nature">
        <title>Genome evolution in yeasts.</title>
        <authorList>
            <person name="Dujon B."/>
            <person name="Sherman D."/>
            <person name="Fischer G."/>
            <person name="Durrens P."/>
            <person name="Casaregola S."/>
            <person name="Lafontaine I."/>
            <person name="de Montigny J."/>
            <person name="Marck C."/>
            <person name="Neuveglise C."/>
            <person name="Talla E."/>
            <person name="Goffard N."/>
            <person name="Frangeul L."/>
            <person name="Aigle M."/>
            <person name="Anthouard V."/>
            <person name="Babour A."/>
            <person name="Barbe V."/>
            <person name="Barnay S."/>
            <person name="Blanchin S."/>
            <person name="Beckerich J.-M."/>
            <person name="Beyne E."/>
            <person name="Bleykasten C."/>
            <person name="Boisrame A."/>
            <person name="Boyer J."/>
            <person name="Cattolico L."/>
            <person name="Confanioleri F."/>
            <person name="de Daruvar A."/>
            <person name="Despons L."/>
            <person name="Fabre E."/>
            <person name="Fairhead C."/>
            <person name="Ferry-Dumazet H."/>
            <person name="Groppi A."/>
            <person name="Hantraye F."/>
            <person name="Hennequin C."/>
            <person name="Jauniaux N."/>
            <person name="Joyet P."/>
            <person name="Kachouri R."/>
            <person name="Kerrest A."/>
            <person name="Koszul R."/>
            <person name="Lemaire M."/>
            <person name="Lesur I."/>
            <person name="Ma L."/>
            <person name="Muller H."/>
            <person name="Nicaud J.-M."/>
            <person name="Nikolski M."/>
            <person name="Oztas S."/>
            <person name="Ozier-Kalogeropoulos O."/>
            <person name="Pellenz S."/>
            <person name="Potier S."/>
            <person name="Richard G.-F."/>
            <person name="Straub M.-L."/>
            <person name="Suleau A."/>
            <person name="Swennen D."/>
            <person name="Tekaia F."/>
            <person name="Wesolowski-Louvel M."/>
            <person name="Westhof E."/>
            <person name="Wirth B."/>
            <person name="Zeniou-Meyer M."/>
            <person name="Zivanovic Y."/>
            <person name="Bolotin-Fukuhara M."/>
            <person name="Thierry A."/>
            <person name="Bouchier C."/>
            <person name="Caudron B."/>
            <person name="Scarpelli C."/>
            <person name="Gaillardin C."/>
            <person name="Weissenbach J."/>
            <person name="Wincker P."/>
            <person name="Souciet J.-L."/>
        </authorList>
    </citation>
    <scope>NUCLEOTIDE SEQUENCE [LARGE SCALE GENOMIC DNA]</scope>
    <source>
        <strain>ATCC 2001 / BCRC 20586 / JCM 3761 / NBRC 0622 / NRRL Y-65 / CBS 138</strain>
    </source>
</reference>
<keyword id="KW-0072">Autophagy</keyword>
<keyword id="KW-0963">Cytoplasm</keyword>
<keyword id="KW-0653">Protein transport</keyword>
<keyword id="KW-1185">Reference proteome</keyword>
<keyword id="KW-0813">Transport</keyword>
<keyword id="KW-0833">Ubl conjugation pathway</keyword>
<protein>
    <recommendedName>
        <fullName>Autophagy-related protein 3</fullName>
    </recommendedName>
    <alternativeName>
        <fullName>Autophagy-related E2-like conjugation enzyme ATG3</fullName>
    </alternativeName>
</protein>